<proteinExistence type="evidence at protein level"/>
<reference key="1">
    <citation type="journal article" date="2003" name="Mol. Microbiol.">
        <title>An integrated analysis of the genome of the hyperthermophilic archaeon Pyrococcus abyssi.</title>
        <authorList>
            <person name="Cohen G.N."/>
            <person name="Barbe V."/>
            <person name="Flament D."/>
            <person name="Galperin M."/>
            <person name="Heilig R."/>
            <person name="Lecompte O."/>
            <person name="Poch O."/>
            <person name="Prieur D."/>
            <person name="Querellou J."/>
            <person name="Ripp R."/>
            <person name="Thierry J.-C."/>
            <person name="Van der Oost J."/>
            <person name="Weissenbach J."/>
            <person name="Zivanovic Y."/>
            <person name="Forterre P."/>
        </authorList>
    </citation>
    <scope>NUCLEOTIDE SEQUENCE [LARGE SCALE GENOMIC DNA]</scope>
    <source>
        <strain>GE5 / Orsay</strain>
    </source>
</reference>
<reference key="2">
    <citation type="journal article" date="2012" name="Curr. Microbiol.">
        <title>Re-annotation of two hyperthermophilic archaea Pyrococcus abyssi GE5 and Pyrococcus furiosus DSM 3638.</title>
        <authorList>
            <person name="Gao J."/>
            <person name="Wang J."/>
        </authorList>
    </citation>
    <scope>GENOME REANNOTATION</scope>
    <source>
        <strain>GE5 / Orsay</strain>
    </source>
</reference>
<sequence>MARDEVRRILPADIKREVIVKDDKAETNPKWGFPPDKRPIELHIQYGVINLDKPPGPTSHEVVAWIKRILNLEKAGHGGTLDPKVSGVLPVALERATRVVQALLPAGKEYVALMHLHGDVPEDKIRAVMKEFEGEIIQRPPLRSAVKRRLRTRKVYYIEILEIDGRDVLFRVGVEAGTYIRSLIHHIGLALGVGAHMAELRRTRSGPFKEDETLVTLHDLVDYYHFWKEDGIEEYIRKAIQPMEKAVEHLPKIWIKDSAVAAVAHGANLTVPGIVKLNAGIKKGDLVAIMTLKDELVALGKAMMSTQEMIERSKGIAVDVEKVFMPRDWYPKLW</sequence>
<name>TRUB_PYRAB</name>
<organism>
    <name type="scientific">Pyrococcus abyssi (strain GE5 / Orsay)</name>
    <dbReference type="NCBI Taxonomy" id="272844"/>
    <lineage>
        <taxon>Archaea</taxon>
        <taxon>Methanobacteriati</taxon>
        <taxon>Methanobacteriota</taxon>
        <taxon>Thermococci</taxon>
        <taxon>Thermococcales</taxon>
        <taxon>Thermococcaceae</taxon>
        <taxon>Pyrococcus</taxon>
    </lineage>
</organism>
<dbReference type="EC" id="5.4.99.25" evidence="1"/>
<dbReference type="EMBL" id="AJ248284">
    <property type="protein sequence ID" value="CAB49444.1"/>
    <property type="molecule type" value="Genomic_DNA"/>
</dbReference>
<dbReference type="EMBL" id="HE613800">
    <property type="protein sequence ID" value="CCE69911.1"/>
    <property type="molecule type" value="Genomic_DNA"/>
</dbReference>
<dbReference type="PIR" id="E75170">
    <property type="entry name" value="E75170"/>
</dbReference>
<dbReference type="RefSeq" id="WP_010867646.1">
    <property type="nucleotide sequence ID" value="NC_000868.1"/>
</dbReference>
<dbReference type="PDB" id="2AUS">
    <property type="method" value="X-ray"/>
    <property type="resolution" value="2.10 A"/>
    <property type="chains" value="A/C=1-334"/>
</dbReference>
<dbReference type="PDBsum" id="2AUS"/>
<dbReference type="SMR" id="Q9V1A5"/>
<dbReference type="STRING" id="272844.PAB0356"/>
<dbReference type="KEGG" id="pab:PAB0356"/>
<dbReference type="PATRIC" id="fig|272844.11.peg.557"/>
<dbReference type="eggNOG" id="arCOG00987">
    <property type="taxonomic scope" value="Archaea"/>
</dbReference>
<dbReference type="HOGENOM" id="CLU_032087_3_0_2"/>
<dbReference type="OrthoDB" id="35866at2157"/>
<dbReference type="PhylomeDB" id="Q9V1A5"/>
<dbReference type="BRENDA" id="5.4.99.25">
    <property type="organism ID" value="5242"/>
</dbReference>
<dbReference type="EvolutionaryTrace" id="Q9V1A5"/>
<dbReference type="Proteomes" id="UP000000810">
    <property type="component" value="Chromosome"/>
</dbReference>
<dbReference type="Proteomes" id="UP000009139">
    <property type="component" value="Chromosome"/>
</dbReference>
<dbReference type="GO" id="GO:0003723">
    <property type="term" value="F:RNA binding"/>
    <property type="evidence" value="ECO:0007669"/>
    <property type="project" value="InterPro"/>
</dbReference>
<dbReference type="GO" id="GO:0160148">
    <property type="term" value="F:tRNA pseudouridine(55) synthase activity"/>
    <property type="evidence" value="ECO:0007669"/>
    <property type="project" value="UniProtKB-EC"/>
</dbReference>
<dbReference type="GO" id="GO:0000495">
    <property type="term" value="P:box H/ACA sno(s)RNA 3'-end processing"/>
    <property type="evidence" value="ECO:0007669"/>
    <property type="project" value="TreeGrafter"/>
</dbReference>
<dbReference type="GO" id="GO:1990481">
    <property type="term" value="P:mRNA pseudouridine synthesis"/>
    <property type="evidence" value="ECO:0007669"/>
    <property type="project" value="TreeGrafter"/>
</dbReference>
<dbReference type="GO" id="GO:0031118">
    <property type="term" value="P:rRNA pseudouridine synthesis"/>
    <property type="evidence" value="ECO:0007669"/>
    <property type="project" value="TreeGrafter"/>
</dbReference>
<dbReference type="GO" id="GO:0031120">
    <property type="term" value="P:snRNA pseudouridine synthesis"/>
    <property type="evidence" value="ECO:0007669"/>
    <property type="project" value="TreeGrafter"/>
</dbReference>
<dbReference type="GO" id="GO:0031119">
    <property type="term" value="P:tRNA pseudouridine synthesis"/>
    <property type="evidence" value="ECO:0007669"/>
    <property type="project" value="UniProtKB-UniRule"/>
</dbReference>
<dbReference type="CDD" id="cd02572">
    <property type="entry name" value="PseudoU_synth_hDyskerin"/>
    <property type="match status" value="1"/>
</dbReference>
<dbReference type="CDD" id="cd21148">
    <property type="entry name" value="PUA_Cbf5"/>
    <property type="match status" value="1"/>
</dbReference>
<dbReference type="FunFam" id="3.30.2350.10:FF:000001">
    <property type="entry name" value="H/ACA ribonucleoprotein complex subunit CBF5"/>
    <property type="match status" value="1"/>
</dbReference>
<dbReference type="FunFam" id="2.30.130.10:FF:000010">
    <property type="entry name" value="Probable tRNA pseudouridine synthase B"/>
    <property type="match status" value="1"/>
</dbReference>
<dbReference type="Gene3D" id="3.30.2350.10">
    <property type="entry name" value="Pseudouridine synthase"/>
    <property type="match status" value="1"/>
</dbReference>
<dbReference type="Gene3D" id="2.30.130.10">
    <property type="entry name" value="PUA domain"/>
    <property type="match status" value="1"/>
</dbReference>
<dbReference type="HAMAP" id="MF_01081">
    <property type="entry name" value="TruB_arch"/>
    <property type="match status" value="1"/>
</dbReference>
<dbReference type="InterPro" id="IPR012960">
    <property type="entry name" value="Dyskerin-like"/>
</dbReference>
<dbReference type="InterPro" id="IPR020103">
    <property type="entry name" value="PsdUridine_synth_cat_dom_sf"/>
</dbReference>
<dbReference type="InterPro" id="IPR002501">
    <property type="entry name" value="PsdUridine_synth_N"/>
</dbReference>
<dbReference type="InterPro" id="IPR002478">
    <property type="entry name" value="PUA"/>
</dbReference>
<dbReference type="InterPro" id="IPR015947">
    <property type="entry name" value="PUA-like_sf"/>
</dbReference>
<dbReference type="InterPro" id="IPR036974">
    <property type="entry name" value="PUA_sf"/>
</dbReference>
<dbReference type="InterPro" id="IPR004802">
    <property type="entry name" value="tRNA_PsdUridine_synth_B_fam"/>
</dbReference>
<dbReference type="InterPro" id="IPR026326">
    <property type="entry name" value="TruB_arch"/>
</dbReference>
<dbReference type="InterPro" id="IPR032819">
    <property type="entry name" value="TruB_C"/>
</dbReference>
<dbReference type="InterPro" id="IPR004521">
    <property type="entry name" value="Uncharacterised_CHP00451"/>
</dbReference>
<dbReference type="NCBIfam" id="TIGR00425">
    <property type="entry name" value="CBF5"/>
    <property type="match status" value="1"/>
</dbReference>
<dbReference type="NCBIfam" id="NF003280">
    <property type="entry name" value="PRK04270.1"/>
    <property type="match status" value="1"/>
</dbReference>
<dbReference type="NCBIfam" id="TIGR00451">
    <property type="entry name" value="unchar_dom_2"/>
    <property type="match status" value="1"/>
</dbReference>
<dbReference type="PANTHER" id="PTHR23127">
    <property type="entry name" value="CENTROMERE/MICROTUBULE BINDING PROTEIN CBF5"/>
    <property type="match status" value="1"/>
</dbReference>
<dbReference type="PANTHER" id="PTHR23127:SF0">
    <property type="entry name" value="H_ACA RIBONUCLEOPROTEIN COMPLEX SUBUNIT DKC1"/>
    <property type="match status" value="1"/>
</dbReference>
<dbReference type="Pfam" id="PF08068">
    <property type="entry name" value="DKCLD"/>
    <property type="match status" value="1"/>
</dbReference>
<dbReference type="Pfam" id="PF01472">
    <property type="entry name" value="PUA"/>
    <property type="match status" value="1"/>
</dbReference>
<dbReference type="Pfam" id="PF16198">
    <property type="entry name" value="TruB_C_2"/>
    <property type="match status" value="1"/>
</dbReference>
<dbReference type="Pfam" id="PF01509">
    <property type="entry name" value="TruB_N"/>
    <property type="match status" value="1"/>
</dbReference>
<dbReference type="SMART" id="SM01136">
    <property type="entry name" value="DKCLD"/>
    <property type="match status" value="1"/>
</dbReference>
<dbReference type="SMART" id="SM00359">
    <property type="entry name" value="PUA"/>
    <property type="match status" value="1"/>
</dbReference>
<dbReference type="SUPFAM" id="SSF55120">
    <property type="entry name" value="Pseudouridine synthase"/>
    <property type="match status" value="1"/>
</dbReference>
<dbReference type="SUPFAM" id="SSF88697">
    <property type="entry name" value="PUA domain-like"/>
    <property type="match status" value="1"/>
</dbReference>
<dbReference type="PROSITE" id="PS50890">
    <property type="entry name" value="PUA"/>
    <property type="match status" value="1"/>
</dbReference>
<evidence type="ECO:0000255" key="1">
    <source>
        <dbReference type="HAMAP-Rule" id="MF_01081"/>
    </source>
</evidence>
<evidence type="ECO:0007829" key="2">
    <source>
        <dbReference type="PDB" id="2AUS"/>
    </source>
</evidence>
<keyword id="KW-0002">3D-structure</keyword>
<keyword id="KW-0413">Isomerase</keyword>
<keyword id="KW-0819">tRNA processing</keyword>
<comment type="function">
    <text evidence="1">Could be responsible for synthesis of pseudouridine from uracil-55 in the psi GC loop of transfer RNAs.</text>
</comment>
<comment type="catalytic activity">
    <reaction evidence="1">
        <text>uridine(55) in tRNA = pseudouridine(55) in tRNA</text>
        <dbReference type="Rhea" id="RHEA:42532"/>
        <dbReference type="Rhea" id="RHEA-COMP:10101"/>
        <dbReference type="Rhea" id="RHEA-COMP:10102"/>
        <dbReference type="ChEBI" id="CHEBI:65314"/>
        <dbReference type="ChEBI" id="CHEBI:65315"/>
        <dbReference type="EC" id="5.4.99.25"/>
    </reaction>
</comment>
<comment type="similarity">
    <text evidence="1">Belongs to the pseudouridine synthase TruB family. Type 2 subfamily.</text>
</comment>
<accession>Q9V1A5</accession>
<accession>G8ZGN2</accession>
<protein>
    <recommendedName>
        <fullName evidence="1">Probable tRNA pseudouridine synthase B</fullName>
        <ecNumber evidence="1">5.4.99.25</ecNumber>
    </recommendedName>
    <alternativeName>
        <fullName evidence="1">tRNA pseudouridine(55) synthase</fullName>
        <shortName evidence="1">Psi55 synthase</shortName>
    </alternativeName>
    <alternativeName>
        <fullName evidence="1">tRNA pseudouridylate synthase</fullName>
    </alternativeName>
    <alternativeName>
        <fullName evidence="1">tRNA-uridine isomerase</fullName>
    </alternativeName>
</protein>
<gene>
    <name evidence="1" type="primary">truB</name>
    <name type="ordered locus">PYRAB05220</name>
    <name type="ORF">PAB0356</name>
</gene>
<feature type="chain" id="PRO_0000121966" description="Probable tRNA pseudouridine synthase B">
    <location>
        <begin position="1"/>
        <end position="334"/>
    </location>
</feature>
<feature type="domain" description="PUA" evidence="1">
    <location>
        <begin position="250"/>
        <end position="325"/>
    </location>
</feature>
<feature type="active site" description="Nucleophile" evidence="1">
    <location>
        <position position="82"/>
    </location>
</feature>
<feature type="strand" evidence="2">
    <location>
        <begin position="18"/>
        <end position="21"/>
    </location>
</feature>
<feature type="helix" evidence="2">
    <location>
        <begin position="35"/>
        <end position="37"/>
    </location>
</feature>
<feature type="helix" evidence="2">
    <location>
        <begin position="40"/>
        <end position="45"/>
    </location>
</feature>
<feature type="strand" evidence="2">
    <location>
        <begin position="47"/>
        <end position="53"/>
    </location>
</feature>
<feature type="strand" evidence="2">
    <location>
        <begin position="55"/>
        <end position="57"/>
    </location>
</feature>
<feature type="helix" evidence="2">
    <location>
        <begin position="59"/>
        <end position="69"/>
    </location>
</feature>
<feature type="strand" evidence="2">
    <location>
        <begin position="75"/>
        <end position="79"/>
    </location>
</feature>
<feature type="strand" evidence="2">
    <location>
        <begin position="86"/>
        <end position="93"/>
    </location>
</feature>
<feature type="helix" evidence="2">
    <location>
        <begin position="94"/>
        <end position="103"/>
    </location>
</feature>
<feature type="strand" evidence="2">
    <location>
        <begin position="108"/>
        <end position="118"/>
    </location>
</feature>
<feature type="helix" evidence="2">
    <location>
        <begin position="122"/>
        <end position="131"/>
    </location>
</feature>
<feature type="strand" evidence="2">
    <location>
        <begin position="133"/>
        <end position="137"/>
    </location>
</feature>
<feature type="strand" evidence="2">
    <location>
        <begin position="152"/>
        <end position="164"/>
    </location>
</feature>
<feature type="strand" evidence="2">
    <location>
        <begin position="167"/>
        <end position="174"/>
    </location>
</feature>
<feature type="helix" evidence="2">
    <location>
        <begin position="180"/>
        <end position="191"/>
    </location>
</feature>
<feature type="strand" evidence="2">
    <location>
        <begin position="195"/>
        <end position="205"/>
    </location>
</feature>
<feature type="strand" evidence="2">
    <location>
        <begin position="208"/>
        <end position="211"/>
    </location>
</feature>
<feature type="helix" evidence="2">
    <location>
        <begin position="217"/>
        <end position="228"/>
    </location>
</feature>
<feature type="helix" evidence="2">
    <location>
        <begin position="234"/>
        <end position="239"/>
    </location>
</feature>
<feature type="strand" evidence="2">
    <location>
        <begin position="240"/>
        <end position="242"/>
    </location>
</feature>
<feature type="helix" evidence="2">
    <location>
        <begin position="243"/>
        <end position="247"/>
    </location>
</feature>
<feature type="strand" evidence="2">
    <location>
        <begin position="252"/>
        <end position="255"/>
    </location>
</feature>
<feature type="helix" evidence="2">
    <location>
        <begin position="257"/>
        <end position="264"/>
    </location>
</feature>
<feature type="helix" evidence="2">
    <location>
        <begin position="271"/>
        <end position="273"/>
    </location>
</feature>
<feature type="strand" evidence="2">
    <location>
        <begin position="274"/>
        <end position="278"/>
    </location>
</feature>
<feature type="strand" evidence="2">
    <location>
        <begin position="286"/>
        <end position="291"/>
    </location>
</feature>
<feature type="strand" evidence="2">
    <location>
        <begin position="296"/>
        <end position="304"/>
    </location>
</feature>
<feature type="helix" evidence="2">
    <location>
        <begin position="306"/>
        <end position="311"/>
    </location>
</feature>
<feature type="strand" evidence="2">
    <location>
        <begin position="313"/>
        <end position="323"/>
    </location>
</feature>